<name>CT5A_CONCN</name>
<keyword id="KW-0027">Amidation</keyword>
<keyword id="KW-1015">Disulfide bond</keyword>
<keyword id="KW-1213">G-protein coupled receptor impairing toxin</keyword>
<keyword id="KW-0964">Secreted</keyword>
<keyword id="KW-0800">Toxin</keyword>
<proteinExistence type="evidence at protein level"/>
<comment type="function">
    <text evidence="1">Interacts selectively with the G-coupled somatostatin sst3 receptor (SSTR3). It displays antagonist property for SSTR3 (Ki=1.5 uM). Other somatostatin receptors are also affected, but with a lower selectivity: SSTR5 (Ki=80.2 uM), SSTR1 (Ki=169 uM), SSTR2 (KI=159 uM), SSTR4 (Ki&gt;100 uM).</text>
</comment>
<comment type="subcellular location">
    <subcellularLocation>
        <location evidence="4">Secreted</location>
    </subcellularLocation>
</comment>
<comment type="tissue specificity">
    <text evidence="4">Expressed by the venom duct.</text>
</comment>
<comment type="domain">
    <text evidence="3">The cysteine framework is V (CC-CC).</text>
</comment>
<comment type="PTM">
    <text evidence="3">Contains 2 disulfide bonds that can be either 'C1-C3, C2-C4' or 'C1-C4, C2-C3', since these disulfide connectivities have been observed for conotoxins with cysteine framework V (for examples, see AC P0DQQ7 and AC P81755).</text>
</comment>
<comment type="miscellaneous">
    <text evidence="4">Negative results: 5-10 uM of the toxin does not have activity on 30 different class A receptors of GPCR, voltage-gated sodium channels (Nav1.2, 1.3, 1.4, 1.5, 1.6, 1.8 and the insect channel BgNaV1), voltage-gated potassium channels (Kv1.1, 1.2, 1.3, 1.4 1.5, 1.6, Kv2.1, hERG and the insect channel Shaker IR), muscular and neuronal nicotinic acetylcholine receptors (4 subtypes) and neurotransmitter transporters (3 subfamilies).</text>
</comment>
<comment type="similarity">
    <text evidence="3">Belongs to the conotoxin T superfamily.</text>
</comment>
<comment type="caution">
    <text evidence="3">Due to the lack of the signal sequence, the classification of this peptide as a T-superfamily member is not definitively established.</text>
</comment>
<comment type="caution">
    <text evidence="3">According to established conopeptide and toxin nomenclature, Greek letters are used to indicate pharmacological targets of toxins. The Greek letter 'tau' has already been attributed to toxins that target transient receptor potential (TRP) channels which is why it is indicated here only as an alternative name (PubMed:18619481).</text>
</comment>
<reference key="1">
    <citation type="journal article" date="2013" name="Biochem. Pharmacol.">
        <title>Identification, structural and pharmacological characterization of tau-CnVA, a conopeptide that selectively interacts with somatostatin sst receptor.</title>
        <authorList>
            <person name="Petrel C."/>
            <person name="Hocking H.G."/>
            <person name="Reynaud M."/>
            <person name="Upert G."/>
            <person name="Favreau P."/>
            <person name="Biass D."/>
            <person name="Paolini-Bertrand M."/>
            <person name="Peigneur S."/>
            <person name="Tytgat J."/>
            <person name="Gilles N."/>
            <person name="Hartley O."/>
            <person name="Boelens R."/>
            <person name="Stocklin R."/>
            <person name="Servent D."/>
        </authorList>
    </citation>
    <scope>NUCLEOTIDE SEQUENCE [MRNA]</scope>
    <scope>SYNTHESIS</scope>
    <scope>FUNCTION</scope>
    <scope>STRUCTURE BY NMR OF THE SYNTHETIC PEPTIDE</scope>
    <scope>AMIDATION AT VAL-14</scope>
    <source>
        <tissue>Venom duct</tissue>
    </source>
</reference>
<evidence type="ECO:0000269" key="1">
    <source>
    </source>
</evidence>
<evidence type="ECO:0000303" key="2">
    <source>
    </source>
</evidence>
<evidence type="ECO:0000305" key="3"/>
<evidence type="ECO:0000305" key="4">
    <source>
    </source>
</evidence>
<dbReference type="SMR" id="P0DJL6"/>
<dbReference type="EvolutionaryTrace" id="P0DJL6"/>
<dbReference type="GO" id="GO:0005576">
    <property type="term" value="C:extracellular region"/>
    <property type="evidence" value="ECO:0007669"/>
    <property type="project" value="UniProtKB-SubCell"/>
</dbReference>
<dbReference type="GO" id="GO:0090729">
    <property type="term" value="F:toxin activity"/>
    <property type="evidence" value="ECO:0007669"/>
    <property type="project" value="UniProtKB-KW"/>
</dbReference>
<organism>
    <name type="scientific">Conus consors</name>
    <name type="common">Singed cone</name>
    <dbReference type="NCBI Taxonomy" id="101297"/>
    <lineage>
        <taxon>Eukaryota</taxon>
        <taxon>Metazoa</taxon>
        <taxon>Spiralia</taxon>
        <taxon>Lophotrochozoa</taxon>
        <taxon>Mollusca</taxon>
        <taxon>Gastropoda</taxon>
        <taxon>Caenogastropoda</taxon>
        <taxon>Neogastropoda</taxon>
        <taxon>Conoidea</taxon>
        <taxon>Conidae</taxon>
        <taxon>Conus</taxon>
        <taxon>Pionoconus</taxon>
    </lineage>
</organism>
<protein>
    <recommendedName>
        <fullName evidence="4">Tau-conotoxin CnVA</fullName>
    </recommendedName>
    <alternativeName>
        <fullName evidence="2">Tau-CnVA</fullName>
    </alternativeName>
</protein>
<accession>P0DJL6</accession>
<sequence length="14" mass="1723">ECCHRQLLCCLRFV</sequence>
<feature type="peptide" id="PRO_0000422696" description="Tau-conotoxin CnVA" evidence="4">
    <location>
        <begin position="1"/>
        <end position="14"/>
    </location>
</feature>
<feature type="modified residue" description="Valine amide" evidence="4">
    <location>
        <position position="14"/>
    </location>
</feature>